<comment type="function">
    <text>Involved in oxygen transport from the lung to the various peripheral tissues.</text>
</comment>
<comment type="subunit">
    <text>Heterotetramer of two alpha chains and two beta chains.</text>
</comment>
<comment type="tissue specificity">
    <text>Red blood cells.</text>
</comment>
<comment type="miscellaneous">
    <text>This alpha chain is the A variant from the minor hemoglobin II. Its sequence differs from those of the alpha-1 chain variants A and B at nine positions each.</text>
</comment>
<comment type="similarity">
    <text evidence="1">Belongs to the globin family.</text>
</comment>
<feature type="chain" id="PRO_0000052774" description="Hemoglobin subunit alpha-2">
    <location>
        <begin position="1"/>
        <end position="141"/>
    </location>
</feature>
<feature type="domain" description="Globin" evidence="1">
    <location>
        <begin position="1"/>
        <end position="141"/>
    </location>
</feature>
<feature type="binding site" evidence="1">
    <location>
        <position position="58"/>
    </location>
    <ligand>
        <name>O2</name>
        <dbReference type="ChEBI" id="CHEBI:15379"/>
    </ligand>
</feature>
<feature type="binding site" description="proximal binding residue" evidence="1">
    <location>
        <position position="87"/>
    </location>
    <ligand>
        <name>heme b</name>
        <dbReference type="ChEBI" id="CHEBI:60344"/>
    </ligand>
    <ligandPart>
        <name>Fe</name>
        <dbReference type="ChEBI" id="CHEBI:18248"/>
    </ligandPart>
</feature>
<protein>
    <recommendedName>
        <fullName>Hemoglobin subunit alpha-2</fullName>
    </recommendedName>
    <alternativeName>
        <fullName>Alpha-2-globin</fullName>
    </alternativeName>
    <alternativeName>
        <fullName>Hemoglobin alpha-2 chain</fullName>
    </alternativeName>
</protein>
<reference key="1">
    <citation type="journal article" date="1973" name="Aust. J. Biol. Sci.">
        <title>Studies on monotreme proteins. 3. Amino acid sequence of the alpha- and beta-globin chains of the minor haemoglobin from the echidna, Tachyglossus aculeatus aculeatus.</title>
        <authorList>
            <person name="Thompson E.O.P."/>
            <person name="Fisher W.K."/>
            <person name="Whittaker R.G."/>
        </authorList>
    </citation>
    <scope>PROTEIN SEQUENCE</scope>
</reference>
<organism>
    <name type="scientific">Tachyglossus aculeatus aculeatus</name>
    <name type="common">Southeast Australian short-beaked echidna</name>
    <dbReference type="NCBI Taxonomy" id="49271"/>
    <lineage>
        <taxon>Eukaryota</taxon>
        <taxon>Metazoa</taxon>
        <taxon>Chordata</taxon>
        <taxon>Craniata</taxon>
        <taxon>Vertebrata</taxon>
        <taxon>Euteleostomi</taxon>
        <taxon>Mammalia</taxon>
        <taxon>Monotremata</taxon>
        <taxon>Tachyglossidae</taxon>
        <taxon>Tachyglossus</taxon>
    </lineage>
</organism>
<proteinExistence type="evidence at protein level"/>
<accession>P01978</accession>
<keyword id="KW-0903">Direct protein sequencing</keyword>
<keyword id="KW-0349">Heme</keyword>
<keyword id="KW-0408">Iron</keyword>
<keyword id="KW-0479">Metal-binding</keyword>
<keyword id="KW-0561">Oxygen transport</keyword>
<keyword id="KW-0813">Transport</keyword>
<name>HBA2_TACAC</name>
<dbReference type="PIR" id="A02301">
    <property type="entry name" value="HATG2"/>
</dbReference>
<dbReference type="SMR" id="P01978"/>
<dbReference type="GO" id="GO:0072562">
    <property type="term" value="C:blood microparticle"/>
    <property type="evidence" value="ECO:0007669"/>
    <property type="project" value="TreeGrafter"/>
</dbReference>
<dbReference type="GO" id="GO:0031838">
    <property type="term" value="C:haptoglobin-hemoglobin complex"/>
    <property type="evidence" value="ECO:0007669"/>
    <property type="project" value="TreeGrafter"/>
</dbReference>
<dbReference type="GO" id="GO:0005833">
    <property type="term" value="C:hemoglobin complex"/>
    <property type="evidence" value="ECO:0007669"/>
    <property type="project" value="InterPro"/>
</dbReference>
<dbReference type="GO" id="GO:0031720">
    <property type="term" value="F:haptoglobin binding"/>
    <property type="evidence" value="ECO:0007669"/>
    <property type="project" value="TreeGrafter"/>
</dbReference>
<dbReference type="GO" id="GO:0020037">
    <property type="term" value="F:heme binding"/>
    <property type="evidence" value="ECO:0007669"/>
    <property type="project" value="InterPro"/>
</dbReference>
<dbReference type="GO" id="GO:0005506">
    <property type="term" value="F:iron ion binding"/>
    <property type="evidence" value="ECO:0007669"/>
    <property type="project" value="InterPro"/>
</dbReference>
<dbReference type="GO" id="GO:0043177">
    <property type="term" value="F:organic acid binding"/>
    <property type="evidence" value="ECO:0007669"/>
    <property type="project" value="TreeGrafter"/>
</dbReference>
<dbReference type="GO" id="GO:0019825">
    <property type="term" value="F:oxygen binding"/>
    <property type="evidence" value="ECO:0007669"/>
    <property type="project" value="InterPro"/>
</dbReference>
<dbReference type="GO" id="GO:0005344">
    <property type="term" value="F:oxygen carrier activity"/>
    <property type="evidence" value="ECO:0007669"/>
    <property type="project" value="UniProtKB-KW"/>
</dbReference>
<dbReference type="GO" id="GO:0004601">
    <property type="term" value="F:peroxidase activity"/>
    <property type="evidence" value="ECO:0007669"/>
    <property type="project" value="TreeGrafter"/>
</dbReference>
<dbReference type="GO" id="GO:0042744">
    <property type="term" value="P:hydrogen peroxide catabolic process"/>
    <property type="evidence" value="ECO:0007669"/>
    <property type="project" value="TreeGrafter"/>
</dbReference>
<dbReference type="CDD" id="cd08927">
    <property type="entry name" value="Hb-alpha-like"/>
    <property type="match status" value="1"/>
</dbReference>
<dbReference type="FunFam" id="1.10.490.10:FF:000002">
    <property type="entry name" value="Hemoglobin subunit alpha"/>
    <property type="match status" value="1"/>
</dbReference>
<dbReference type="Gene3D" id="1.10.490.10">
    <property type="entry name" value="Globins"/>
    <property type="match status" value="1"/>
</dbReference>
<dbReference type="InterPro" id="IPR000971">
    <property type="entry name" value="Globin"/>
</dbReference>
<dbReference type="InterPro" id="IPR009050">
    <property type="entry name" value="Globin-like_sf"/>
</dbReference>
<dbReference type="InterPro" id="IPR012292">
    <property type="entry name" value="Globin/Proto"/>
</dbReference>
<dbReference type="InterPro" id="IPR002338">
    <property type="entry name" value="Hemoglobin_a-typ"/>
</dbReference>
<dbReference type="InterPro" id="IPR050056">
    <property type="entry name" value="Hemoglobin_oxygen_transport"/>
</dbReference>
<dbReference type="InterPro" id="IPR002339">
    <property type="entry name" value="Hemoglobin_pi"/>
</dbReference>
<dbReference type="PANTHER" id="PTHR11442">
    <property type="entry name" value="HEMOGLOBIN FAMILY MEMBER"/>
    <property type="match status" value="1"/>
</dbReference>
<dbReference type="PANTHER" id="PTHR11442:SF48">
    <property type="entry name" value="HEMOGLOBIN SUBUNIT ALPHA"/>
    <property type="match status" value="1"/>
</dbReference>
<dbReference type="Pfam" id="PF00042">
    <property type="entry name" value="Globin"/>
    <property type="match status" value="1"/>
</dbReference>
<dbReference type="PRINTS" id="PR00612">
    <property type="entry name" value="ALPHAHAEM"/>
</dbReference>
<dbReference type="PRINTS" id="PR00815">
    <property type="entry name" value="PIHAEM"/>
</dbReference>
<dbReference type="SUPFAM" id="SSF46458">
    <property type="entry name" value="Globin-like"/>
    <property type="match status" value="1"/>
</dbReference>
<dbReference type="PROSITE" id="PS01033">
    <property type="entry name" value="GLOBIN"/>
    <property type="match status" value="1"/>
</dbReference>
<evidence type="ECO:0000255" key="1">
    <source>
        <dbReference type="PROSITE-ProRule" id="PRU00238"/>
    </source>
</evidence>
<sequence length="141" mass="15585">VLTDAERKEVTSLWGKASGHAEDYGAEALERLFLSFPTTKTYFSHMDLSKGSAHVRAHGKKVADALTTAVGHFNDMDGALSDLSDLHAHKLRVDPVNFKLLAHCFLVVLARHHPEEFTPSAHAAMDKFLSRVATVLTSKYR</sequence>